<keyword id="KW-0687">Ribonucleoprotein</keyword>
<keyword id="KW-0689">Ribosomal protein</keyword>
<dbReference type="EMBL" id="CP001164">
    <property type="protein sequence ID" value="ACI35529.1"/>
    <property type="molecule type" value="Genomic_DNA"/>
</dbReference>
<dbReference type="RefSeq" id="WP_000829818.1">
    <property type="nucleotide sequence ID" value="NC_011353.1"/>
</dbReference>
<dbReference type="SMR" id="B5YSV6"/>
<dbReference type="GeneID" id="98390344"/>
<dbReference type="KEGG" id="ecf:ECH74115_4547"/>
<dbReference type="HOGENOM" id="CLU_046483_2_1_6"/>
<dbReference type="GO" id="GO:0022627">
    <property type="term" value="C:cytosolic small ribosomal subunit"/>
    <property type="evidence" value="ECO:0007669"/>
    <property type="project" value="TreeGrafter"/>
</dbReference>
<dbReference type="GO" id="GO:0003723">
    <property type="term" value="F:RNA binding"/>
    <property type="evidence" value="ECO:0007669"/>
    <property type="project" value="TreeGrafter"/>
</dbReference>
<dbReference type="GO" id="GO:0003735">
    <property type="term" value="F:structural constituent of ribosome"/>
    <property type="evidence" value="ECO:0007669"/>
    <property type="project" value="InterPro"/>
</dbReference>
<dbReference type="GO" id="GO:0006412">
    <property type="term" value="P:translation"/>
    <property type="evidence" value="ECO:0007669"/>
    <property type="project" value="UniProtKB-UniRule"/>
</dbReference>
<dbReference type="FunFam" id="3.30.230.10:FF:000001">
    <property type="entry name" value="30S ribosomal protein S9"/>
    <property type="match status" value="1"/>
</dbReference>
<dbReference type="Gene3D" id="3.30.230.10">
    <property type="match status" value="1"/>
</dbReference>
<dbReference type="HAMAP" id="MF_00532_B">
    <property type="entry name" value="Ribosomal_uS9_B"/>
    <property type="match status" value="1"/>
</dbReference>
<dbReference type="InterPro" id="IPR020568">
    <property type="entry name" value="Ribosomal_Su5_D2-typ_SF"/>
</dbReference>
<dbReference type="InterPro" id="IPR000754">
    <property type="entry name" value="Ribosomal_uS9"/>
</dbReference>
<dbReference type="InterPro" id="IPR023035">
    <property type="entry name" value="Ribosomal_uS9_bac/plastid"/>
</dbReference>
<dbReference type="InterPro" id="IPR020574">
    <property type="entry name" value="Ribosomal_uS9_CS"/>
</dbReference>
<dbReference type="InterPro" id="IPR014721">
    <property type="entry name" value="Ribsml_uS5_D2-typ_fold_subgr"/>
</dbReference>
<dbReference type="NCBIfam" id="NF001099">
    <property type="entry name" value="PRK00132.1"/>
    <property type="match status" value="1"/>
</dbReference>
<dbReference type="PANTHER" id="PTHR21569">
    <property type="entry name" value="RIBOSOMAL PROTEIN S9"/>
    <property type="match status" value="1"/>
</dbReference>
<dbReference type="PANTHER" id="PTHR21569:SF1">
    <property type="entry name" value="SMALL RIBOSOMAL SUBUNIT PROTEIN US9M"/>
    <property type="match status" value="1"/>
</dbReference>
<dbReference type="Pfam" id="PF00380">
    <property type="entry name" value="Ribosomal_S9"/>
    <property type="match status" value="1"/>
</dbReference>
<dbReference type="SUPFAM" id="SSF54211">
    <property type="entry name" value="Ribosomal protein S5 domain 2-like"/>
    <property type="match status" value="1"/>
</dbReference>
<dbReference type="PROSITE" id="PS00360">
    <property type="entry name" value="RIBOSOMAL_S9"/>
    <property type="match status" value="1"/>
</dbReference>
<proteinExistence type="inferred from homology"/>
<sequence length="130" mass="14856">MAENQYYGTGRRKSSAARVFIKPGNGKIVINQRSLEQYFGRETARMVVRQPLELVDMVEKLDLYITVKGGGISGQAGAIRHGITRALMEYDESLRSELRKAGFVTRDARQVERKKVGLRKARRRPQFSKR</sequence>
<organism>
    <name type="scientific">Escherichia coli O157:H7 (strain EC4115 / EHEC)</name>
    <dbReference type="NCBI Taxonomy" id="444450"/>
    <lineage>
        <taxon>Bacteria</taxon>
        <taxon>Pseudomonadati</taxon>
        <taxon>Pseudomonadota</taxon>
        <taxon>Gammaproteobacteria</taxon>
        <taxon>Enterobacterales</taxon>
        <taxon>Enterobacteriaceae</taxon>
        <taxon>Escherichia</taxon>
    </lineage>
</organism>
<protein>
    <recommendedName>
        <fullName evidence="1">Small ribosomal subunit protein uS9</fullName>
    </recommendedName>
    <alternativeName>
        <fullName evidence="2">30S ribosomal protein S9</fullName>
    </alternativeName>
</protein>
<gene>
    <name evidence="1" type="primary">rpsI</name>
    <name type="ordered locus">ECH74115_4547</name>
</gene>
<name>RS9_ECO5E</name>
<feature type="chain" id="PRO_1000128117" description="Small ribosomal subunit protein uS9">
    <location>
        <begin position="1"/>
        <end position="130"/>
    </location>
</feature>
<comment type="similarity">
    <text evidence="1">Belongs to the universal ribosomal protein uS9 family.</text>
</comment>
<evidence type="ECO:0000255" key="1">
    <source>
        <dbReference type="HAMAP-Rule" id="MF_00532"/>
    </source>
</evidence>
<evidence type="ECO:0000305" key="2"/>
<accession>B5YSV6</accession>
<reference key="1">
    <citation type="journal article" date="2011" name="Proc. Natl. Acad. Sci. U.S.A.">
        <title>Genomic anatomy of Escherichia coli O157:H7 outbreaks.</title>
        <authorList>
            <person name="Eppinger M."/>
            <person name="Mammel M.K."/>
            <person name="Leclerc J.E."/>
            <person name="Ravel J."/>
            <person name="Cebula T.A."/>
        </authorList>
    </citation>
    <scope>NUCLEOTIDE SEQUENCE [LARGE SCALE GENOMIC DNA]</scope>
    <source>
        <strain>EC4115 / EHEC</strain>
    </source>
</reference>